<feature type="initiator methionine" description="Removed" evidence="1">
    <location>
        <position position="1"/>
    </location>
</feature>
<feature type="chain" id="PRO_0000163523" description="Large ribosomal subunit protein bL19">
    <location>
        <begin position="2"/>
        <end position="115"/>
    </location>
</feature>
<accession>P0A2A1</accession>
<accession>P36240</accession>
<comment type="function">
    <text evidence="1">This protein is located at the 30S-50S ribosomal subunit interface and may play a role in the structure and function of the aminoacyl-tRNA binding site.</text>
</comment>
<comment type="similarity">
    <text evidence="2">Belongs to the bacterial ribosomal protein bL19 family.</text>
</comment>
<keyword id="KW-1185">Reference proteome</keyword>
<keyword id="KW-0687">Ribonucleoprotein</keyword>
<keyword id="KW-0689">Ribosomal protein</keyword>
<dbReference type="EMBL" id="X74933">
    <property type="protein sequence ID" value="CAA52888.1"/>
    <property type="molecule type" value="Genomic_DNA"/>
</dbReference>
<dbReference type="EMBL" id="AE006468">
    <property type="protein sequence ID" value="AAL21562.1"/>
    <property type="molecule type" value="Genomic_DNA"/>
</dbReference>
<dbReference type="PIR" id="S37176">
    <property type="entry name" value="S37176"/>
</dbReference>
<dbReference type="RefSeq" id="NP_461603.1">
    <property type="nucleotide sequence ID" value="NC_003197.2"/>
</dbReference>
<dbReference type="RefSeq" id="WP_000065257.1">
    <property type="nucleotide sequence ID" value="NC_003197.2"/>
</dbReference>
<dbReference type="SMR" id="P0A2A1"/>
<dbReference type="STRING" id="99287.STM2673"/>
<dbReference type="PaxDb" id="99287-STM2673"/>
<dbReference type="GeneID" id="1254196"/>
<dbReference type="KEGG" id="stm:STM2673"/>
<dbReference type="PATRIC" id="fig|99287.12.peg.2817"/>
<dbReference type="HOGENOM" id="CLU_103507_2_1_6"/>
<dbReference type="OMA" id="TITVYYE"/>
<dbReference type="PhylomeDB" id="P0A2A1"/>
<dbReference type="BioCyc" id="SENT99287:STM2673-MONOMER"/>
<dbReference type="Proteomes" id="UP000001014">
    <property type="component" value="Chromosome"/>
</dbReference>
<dbReference type="GO" id="GO:0022625">
    <property type="term" value="C:cytosolic large ribosomal subunit"/>
    <property type="evidence" value="ECO:0000318"/>
    <property type="project" value="GO_Central"/>
</dbReference>
<dbReference type="GO" id="GO:0003735">
    <property type="term" value="F:structural constituent of ribosome"/>
    <property type="evidence" value="ECO:0000318"/>
    <property type="project" value="GO_Central"/>
</dbReference>
<dbReference type="GO" id="GO:0006412">
    <property type="term" value="P:translation"/>
    <property type="evidence" value="ECO:0007669"/>
    <property type="project" value="UniProtKB-UniRule"/>
</dbReference>
<dbReference type="FunFam" id="2.30.30.790:FF:000001">
    <property type="entry name" value="50S ribosomal protein L19"/>
    <property type="match status" value="1"/>
</dbReference>
<dbReference type="Gene3D" id="2.30.30.790">
    <property type="match status" value="1"/>
</dbReference>
<dbReference type="HAMAP" id="MF_00402">
    <property type="entry name" value="Ribosomal_bL19"/>
    <property type="match status" value="1"/>
</dbReference>
<dbReference type="InterPro" id="IPR001857">
    <property type="entry name" value="Ribosomal_bL19"/>
</dbReference>
<dbReference type="InterPro" id="IPR018257">
    <property type="entry name" value="Ribosomal_bL19_CS"/>
</dbReference>
<dbReference type="InterPro" id="IPR038657">
    <property type="entry name" value="Ribosomal_bL19_sf"/>
</dbReference>
<dbReference type="InterPro" id="IPR008991">
    <property type="entry name" value="Translation_prot_SH3-like_sf"/>
</dbReference>
<dbReference type="NCBIfam" id="TIGR01024">
    <property type="entry name" value="rplS_bact"/>
    <property type="match status" value="1"/>
</dbReference>
<dbReference type="PANTHER" id="PTHR15680:SF9">
    <property type="entry name" value="LARGE RIBOSOMAL SUBUNIT PROTEIN BL19M"/>
    <property type="match status" value="1"/>
</dbReference>
<dbReference type="PANTHER" id="PTHR15680">
    <property type="entry name" value="RIBOSOMAL PROTEIN L19"/>
    <property type="match status" value="1"/>
</dbReference>
<dbReference type="Pfam" id="PF01245">
    <property type="entry name" value="Ribosomal_L19"/>
    <property type="match status" value="1"/>
</dbReference>
<dbReference type="PIRSF" id="PIRSF002191">
    <property type="entry name" value="Ribosomal_L19"/>
    <property type="match status" value="1"/>
</dbReference>
<dbReference type="PRINTS" id="PR00061">
    <property type="entry name" value="RIBOSOMALL19"/>
</dbReference>
<dbReference type="SUPFAM" id="SSF50104">
    <property type="entry name" value="Translation proteins SH3-like domain"/>
    <property type="match status" value="1"/>
</dbReference>
<dbReference type="PROSITE" id="PS01015">
    <property type="entry name" value="RIBOSOMAL_L19"/>
    <property type="match status" value="1"/>
</dbReference>
<name>RL19_SALTY</name>
<gene>
    <name type="primary">rplS</name>
    <name type="ordered locus">STM2673</name>
</gene>
<protein>
    <recommendedName>
        <fullName evidence="2">Large ribosomal subunit protein bL19</fullName>
    </recommendedName>
    <alternativeName>
        <fullName>50S ribosomal protein L19</fullName>
    </alternativeName>
</protein>
<organism>
    <name type="scientific">Salmonella typhimurium (strain LT2 / SGSC1412 / ATCC 700720)</name>
    <dbReference type="NCBI Taxonomy" id="99287"/>
    <lineage>
        <taxon>Bacteria</taxon>
        <taxon>Pseudomonadati</taxon>
        <taxon>Pseudomonadota</taxon>
        <taxon>Gammaproteobacteria</taxon>
        <taxon>Enterobacterales</taxon>
        <taxon>Enterobacteriaceae</taxon>
        <taxon>Salmonella</taxon>
    </lineage>
</organism>
<sequence length="115" mass="13130">MSNIIKQLEQEQMKQNVPSFRPGDTVEVKVWVVEGTKKRLQAFEGVVIAIRNRGLHSAFTVRKISNGEGVERVFQTHSPVVDSIAVKRRGAVRKAKLYYLRERTGKAARIKERLN</sequence>
<proteinExistence type="inferred from homology"/>
<evidence type="ECO:0000250" key="1"/>
<evidence type="ECO:0000305" key="2"/>
<reference key="1">
    <citation type="submission" date="1993-09" db="EMBL/GenBank/DDBJ databases">
        <authorList>
            <person name="Persson B.C."/>
        </authorList>
    </citation>
    <scope>NUCLEOTIDE SEQUENCE [GENOMIC DNA]</scope>
    <source>
        <strain>LT2</strain>
    </source>
</reference>
<reference key="2">
    <citation type="journal article" date="2001" name="Nature">
        <title>Complete genome sequence of Salmonella enterica serovar Typhimurium LT2.</title>
        <authorList>
            <person name="McClelland M."/>
            <person name="Sanderson K.E."/>
            <person name="Spieth J."/>
            <person name="Clifton S.W."/>
            <person name="Latreille P."/>
            <person name="Courtney L."/>
            <person name="Porwollik S."/>
            <person name="Ali J."/>
            <person name="Dante M."/>
            <person name="Du F."/>
            <person name="Hou S."/>
            <person name="Layman D."/>
            <person name="Leonard S."/>
            <person name="Nguyen C."/>
            <person name="Scott K."/>
            <person name="Holmes A."/>
            <person name="Grewal N."/>
            <person name="Mulvaney E."/>
            <person name="Ryan E."/>
            <person name="Sun H."/>
            <person name="Florea L."/>
            <person name="Miller W."/>
            <person name="Stoneking T."/>
            <person name="Nhan M."/>
            <person name="Waterston R."/>
            <person name="Wilson R.K."/>
        </authorList>
    </citation>
    <scope>NUCLEOTIDE SEQUENCE [LARGE SCALE GENOMIC DNA]</scope>
    <source>
        <strain>LT2 / SGSC1412 / ATCC 700720</strain>
    </source>
</reference>